<feature type="chain" id="PRO_0000181397" description="Probable nicotinate-nucleotide adenylyltransferase">
    <location>
        <begin position="1"/>
        <end position="193"/>
    </location>
</feature>
<protein>
    <recommendedName>
        <fullName>Probable nicotinate-nucleotide adenylyltransferase</fullName>
        <ecNumber>2.7.7.18</ecNumber>
    </recommendedName>
    <alternativeName>
        <fullName>Deamido-NAD(+) diphosphorylase</fullName>
    </alternativeName>
    <alternativeName>
        <fullName>Deamido-NAD(+) pyrophosphorylase</fullName>
    </alternativeName>
    <alternativeName>
        <fullName>Nicotinate mononucleotide adenylyltransferase</fullName>
        <shortName>NaMN adenylyltransferase</shortName>
    </alternativeName>
</protein>
<keyword id="KW-0067">ATP-binding</keyword>
<keyword id="KW-0520">NAD</keyword>
<keyword id="KW-0547">Nucleotide-binding</keyword>
<keyword id="KW-0548">Nucleotidyltransferase</keyword>
<keyword id="KW-0662">Pyridine nucleotide biosynthesis</keyword>
<keyword id="KW-1185">Reference proteome</keyword>
<keyword id="KW-0808">Transferase</keyword>
<dbReference type="EC" id="2.7.7.18"/>
<dbReference type="EMBL" id="AE000783">
    <property type="protein sequence ID" value="AAC67126.2"/>
    <property type="molecule type" value="Genomic_DNA"/>
</dbReference>
<dbReference type="PIR" id="E70197">
    <property type="entry name" value="E70197"/>
</dbReference>
<dbReference type="RefSeq" id="NP_212916.2">
    <property type="nucleotide sequence ID" value="NC_001318.1"/>
</dbReference>
<dbReference type="RefSeq" id="WP_002656094.1">
    <property type="nucleotide sequence ID" value="NC_001318.1"/>
</dbReference>
<dbReference type="SMR" id="O51723"/>
<dbReference type="STRING" id="224326.BB_0782"/>
<dbReference type="PaxDb" id="224326-BB_0782"/>
<dbReference type="EnsemblBacteria" id="AAC67126">
    <property type="protein sequence ID" value="AAC67126"/>
    <property type="gene ID" value="BB_0782"/>
</dbReference>
<dbReference type="KEGG" id="bbu:BB_0782"/>
<dbReference type="PATRIC" id="fig|224326.49.peg.1174"/>
<dbReference type="HOGENOM" id="CLU_069765_1_0_12"/>
<dbReference type="OrthoDB" id="5295945at2"/>
<dbReference type="UniPathway" id="UPA00253">
    <property type="reaction ID" value="UER00332"/>
</dbReference>
<dbReference type="Proteomes" id="UP000001807">
    <property type="component" value="Chromosome"/>
</dbReference>
<dbReference type="GO" id="GO:0005524">
    <property type="term" value="F:ATP binding"/>
    <property type="evidence" value="ECO:0007669"/>
    <property type="project" value="UniProtKB-KW"/>
</dbReference>
<dbReference type="GO" id="GO:0004515">
    <property type="term" value="F:nicotinate-nucleotide adenylyltransferase activity"/>
    <property type="evidence" value="ECO:0007669"/>
    <property type="project" value="UniProtKB-UniRule"/>
</dbReference>
<dbReference type="GO" id="GO:0009435">
    <property type="term" value="P:NAD biosynthetic process"/>
    <property type="evidence" value="ECO:0007669"/>
    <property type="project" value="UniProtKB-UniRule"/>
</dbReference>
<dbReference type="CDD" id="cd02165">
    <property type="entry name" value="NMNAT"/>
    <property type="match status" value="1"/>
</dbReference>
<dbReference type="Gene3D" id="3.40.50.620">
    <property type="entry name" value="HUPs"/>
    <property type="match status" value="1"/>
</dbReference>
<dbReference type="HAMAP" id="MF_00244">
    <property type="entry name" value="NaMN_adenylyltr"/>
    <property type="match status" value="1"/>
</dbReference>
<dbReference type="InterPro" id="IPR004821">
    <property type="entry name" value="Cyt_trans-like"/>
</dbReference>
<dbReference type="InterPro" id="IPR005248">
    <property type="entry name" value="NadD/NMNAT"/>
</dbReference>
<dbReference type="InterPro" id="IPR014729">
    <property type="entry name" value="Rossmann-like_a/b/a_fold"/>
</dbReference>
<dbReference type="NCBIfam" id="TIGR00125">
    <property type="entry name" value="cyt_tran_rel"/>
    <property type="match status" value="1"/>
</dbReference>
<dbReference type="NCBIfam" id="TIGR00482">
    <property type="entry name" value="nicotinate (nicotinamide) nucleotide adenylyltransferase"/>
    <property type="match status" value="1"/>
</dbReference>
<dbReference type="NCBIfam" id="NF000840">
    <property type="entry name" value="PRK00071.1-3"/>
    <property type="match status" value="1"/>
</dbReference>
<dbReference type="PANTHER" id="PTHR39321">
    <property type="entry name" value="NICOTINATE-NUCLEOTIDE ADENYLYLTRANSFERASE-RELATED"/>
    <property type="match status" value="1"/>
</dbReference>
<dbReference type="PANTHER" id="PTHR39321:SF3">
    <property type="entry name" value="PHOSPHOPANTETHEINE ADENYLYLTRANSFERASE"/>
    <property type="match status" value="1"/>
</dbReference>
<dbReference type="Pfam" id="PF01467">
    <property type="entry name" value="CTP_transf_like"/>
    <property type="match status" value="1"/>
</dbReference>
<dbReference type="SUPFAM" id="SSF52374">
    <property type="entry name" value="Nucleotidylyl transferase"/>
    <property type="match status" value="1"/>
</dbReference>
<sequence>MRIAILGGTYNPVHIGHIFLAKEIEYLLNIDRVIFIPTCNPAHKLIDENVSVSNRIDMLKLALENEDKMFIDDCDIINGGITYTVDTISCVKKKYKNDKLFLIIGDDLFQNFDSWKDPQSIVSSVELVVAHRIYKERLKSSFKHIYIDNKIIPISSSEIRNRIVNGLPVSYLLPFGVLKYIKDNNLYVKKVNV</sequence>
<name>NADD_BORBU</name>
<gene>
    <name type="primary">nadD</name>
    <name type="ordered locus">BB_0782</name>
</gene>
<organism>
    <name type="scientific">Borreliella burgdorferi (strain ATCC 35210 / DSM 4680 / CIP 102532 / B31)</name>
    <name type="common">Borrelia burgdorferi</name>
    <dbReference type="NCBI Taxonomy" id="224326"/>
    <lineage>
        <taxon>Bacteria</taxon>
        <taxon>Pseudomonadati</taxon>
        <taxon>Spirochaetota</taxon>
        <taxon>Spirochaetia</taxon>
        <taxon>Spirochaetales</taxon>
        <taxon>Borreliaceae</taxon>
        <taxon>Borreliella</taxon>
    </lineage>
</organism>
<evidence type="ECO:0000250" key="1"/>
<evidence type="ECO:0000305" key="2"/>
<accession>O51723</accession>
<reference key="1">
    <citation type="journal article" date="1997" name="Nature">
        <title>Genomic sequence of a Lyme disease spirochaete, Borrelia burgdorferi.</title>
        <authorList>
            <person name="Fraser C.M."/>
            <person name="Casjens S."/>
            <person name="Huang W.M."/>
            <person name="Sutton G.G."/>
            <person name="Clayton R.A."/>
            <person name="Lathigra R."/>
            <person name="White O."/>
            <person name="Ketchum K.A."/>
            <person name="Dodson R.J."/>
            <person name="Hickey E.K."/>
            <person name="Gwinn M.L."/>
            <person name="Dougherty B.A."/>
            <person name="Tomb J.-F."/>
            <person name="Fleischmann R.D."/>
            <person name="Richardson D.L."/>
            <person name="Peterson J.D."/>
            <person name="Kerlavage A.R."/>
            <person name="Quackenbush J."/>
            <person name="Salzberg S.L."/>
            <person name="Hanson M."/>
            <person name="van Vugt R."/>
            <person name="Palmer N."/>
            <person name="Adams M.D."/>
            <person name="Gocayne J.D."/>
            <person name="Weidman J.F."/>
            <person name="Utterback T.R."/>
            <person name="Watthey L."/>
            <person name="McDonald L.A."/>
            <person name="Artiach P."/>
            <person name="Bowman C."/>
            <person name="Garland S.A."/>
            <person name="Fujii C."/>
            <person name="Cotton M.D."/>
            <person name="Horst K."/>
            <person name="Roberts K.M."/>
            <person name="Hatch B."/>
            <person name="Smith H.O."/>
            <person name="Venter J.C."/>
        </authorList>
    </citation>
    <scope>NUCLEOTIDE SEQUENCE [LARGE SCALE GENOMIC DNA]</scope>
    <source>
        <strain>ATCC 35210 / DSM 4680 / CIP 102532 / B31</strain>
    </source>
</reference>
<comment type="function">
    <text evidence="1">Catalyzes the reversible adenylation of nicotinate mononucleotide (NaMN) to nicotinic acid adenine dinucleotide (NaAD).</text>
</comment>
<comment type="catalytic activity">
    <reaction>
        <text>nicotinate beta-D-ribonucleotide + ATP + H(+) = deamido-NAD(+) + diphosphate</text>
        <dbReference type="Rhea" id="RHEA:22860"/>
        <dbReference type="ChEBI" id="CHEBI:15378"/>
        <dbReference type="ChEBI" id="CHEBI:30616"/>
        <dbReference type="ChEBI" id="CHEBI:33019"/>
        <dbReference type="ChEBI" id="CHEBI:57502"/>
        <dbReference type="ChEBI" id="CHEBI:58437"/>
        <dbReference type="EC" id="2.7.7.18"/>
    </reaction>
</comment>
<comment type="pathway">
    <text>Cofactor biosynthesis; NAD(+) biosynthesis; deamido-NAD(+) from nicotinate D-ribonucleotide: step 1/1.</text>
</comment>
<comment type="similarity">
    <text evidence="2">Belongs to the NadD family.</text>
</comment>
<proteinExistence type="inferred from homology"/>